<sequence length="243" mass="27053">MAKVEQVLSLEPQHELKFRGPFTDVVTTNLKLGNPTDRNVCFKVKTTAPRRYCVRPNSGIIDAGASINVSVMLQPFDYDPNEKSKHKFMVQSMFAPADTSDMEAAWKEAKPEDLMDSKLRCVFELPAENDKPHDVEINKIISTTASKTETPVVSKALSSALDDTEVKKVMEECKRLQSEVQRLREENKQLKEEDGLRMRKPVLSNSPAPAPATPGKEEGLSTRLLALVVLFFIVGVIIGKIAL</sequence>
<organism>
    <name type="scientific">Sus scrofa</name>
    <name type="common">Pig</name>
    <dbReference type="NCBI Taxonomy" id="9823"/>
    <lineage>
        <taxon>Eukaryota</taxon>
        <taxon>Metazoa</taxon>
        <taxon>Chordata</taxon>
        <taxon>Craniata</taxon>
        <taxon>Vertebrata</taxon>
        <taxon>Euteleostomi</taxon>
        <taxon>Mammalia</taxon>
        <taxon>Eutheria</taxon>
        <taxon>Laurasiatheria</taxon>
        <taxon>Artiodactyla</taxon>
        <taxon>Suina</taxon>
        <taxon>Suidae</taxon>
        <taxon>Sus</taxon>
    </lineage>
</organism>
<name>VAPB_PIG</name>
<dbReference type="EMBL" id="CR956404">
    <property type="protein sequence ID" value="CAN13351.1"/>
    <property type="molecule type" value="Genomic_DNA"/>
</dbReference>
<dbReference type="RefSeq" id="NP_001116685.1">
    <property type="nucleotide sequence ID" value="NM_001123213.1"/>
</dbReference>
<dbReference type="BMRB" id="A5GFS8"/>
<dbReference type="SMR" id="A5GFS8"/>
<dbReference type="FunCoup" id="A5GFS8">
    <property type="interactions" value="1444"/>
</dbReference>
<dbReference type="STRING" id="9823.ENSSSCP00000059880"/>
<dbReference type="GlyGen" id="A5GFS8">
    <property type="glycosylation" value="1 site"/>
</dbReference>
<dbReference type="PaxDb" id="9823-ENSSSCP00000008012"/>
<dbReference type="PeptideAtlas" id="A5GFS8"/>
<dbReference type="Ensembl" id="ENSSSCT00070037731.1">
    <property type="protein sequence ID" value="ENSSSCP00070031559.1"/>
    <property type="gene ID" value="ENSSSCG00070019099.1"/>
</dbReference>
<dbReference type="Ensembl" id="ENSSSCT00070037773.1">
    <property type="protein sequence ID" value="ENSSSCP00070031593.1"/>
    <property type="gene ID" value="ENSSSCG00070019099.1"/>
</dbReference>
<dbReference type="GeneID" id="100144536"/>
<dbReference type="KEGG" id="ssc:100144536"/>
<dbReference type="CTD" id="9217"/>
<dbReference type="eggNOG" id="KOG0439">
    <property type="taxonomic scope" value="Eukaryota"/>
</dbReference>
<dbReference type="HOGENOM" id="CLU_032848_0_1_1"/>
<dbReference type="InParanoid" id="A5GFS8"/>
<dbReference type="OrthoDB" id="264603at2759"/>
<dbReference type="TreeFam" id="TF317024"/>
<dbReference type="Reactome" id="R-SSC-8980692">
    <property type="pathway name" value="RHOA GTPase cycle"/>
</dbReference>
<dbReference type="Reactome" id="R-SSC-9013106">
    <property type="pathway name" value="RHOC GTPase cycle"/>
</dbReference>
<dbReference type="Reactome" id="R-SSC-9013404">
    <property type="pathway name" value="RAC2 GTPase cycle"/>
</dbReference>
<dbReference type="Reactome" id="R-SSC-9013405">
    <property type="pathway name" value="RHOD GTPase cycle"/>
</dbReference>
<dbReference type="Reactome" id="R-SSC-9013408">
    <property type="pathway name" value="RHOG GTPase cycle"/>
</dbReference>
<dbReference type="Proteomes" id="UP000008227">
    <property type="component" value="Unplaced"/>
</dbReference>
<dbReference type="Proteomes" id="UP000314985">
    <property type="component" value="Chromosome 17"/>
</dbReference>
<dbReference type="Proteomes" id="UP000694570">
    <property type="component" value="Unplaced"/>
</dbReference>
<dbReference type="Proteomes" id="UP000694571">
    <property type="component" value="Unplaced"/>
</dbReference>
<dbReference type="Proteomes" id="UP000694720">
    <property type="component" value="Unplaced"/>
</dbReference>
<dbReference type="Proteomes" id="UP000694722">
    <property type="component" value="Unplaced"/>
</dbReference>
<dbReference type="Proteomes" id="UP000694723">
    <property type="component" value="Unplaced"/>
</dbReference>
<dbReference type="Proteomes" id="UP000694724">
    <property type="component" value="Unplaced"/>
</dbReference>
<dbReference type="Proteomes" id="UP000694725">
    <property type="component" value="Unplaced"/>
</dbReference>
<dbReference type="Proteomes" id="UP000694726">
    <property type="component" value="Unplaced"/>
</dbReference>
<dbReference type="Proteomes" id="UP000694727">
    <property type="component" value="Unplaced"/>
</dbReference>
<dbReference type="Proteomes" id="UP000694728">
    <property type="component" value="Unplaced"/>
</dbReference>
<dbReference type="GO" id="GO:0005783">
    <property type="term" value="C:endoplasmic reticulum"/>
    <property type="evidence" value="ECO:0000250"/>
    <property type="project" value="UniProtKB"/>
</dbReference>
<dbReference type="GO" id="GO:0005789">
    <property type="term" value="C:endoplasmic reticulum membrane"/>
    <property type="evidence" value="ECO:0000250"/>
    <property type="project" value="UniProtKB"/>
</dbReference>
<dbReference type="GO" id="GO:0005794">
    <property type="term" value="C:Golgi apparatus"/>
    <property type="evidence" value="ECO:0000250"/>
    <property type="project" value="UniProtKB"/>
</dbReference>
<dbReference type="GO" id="GO:0005886">
    <property type="term" value="C:plasma membrane"/>
    <property type="evidence" value="ECO:0000318"/>
    <property type="project" value="GO_Central"/>
</dbReference>
<dbReference type="GO" id="GO:0048487">
    <property type="term" value="F:beta-tubulin binding"/>
    <property type="evidence" value="ECO:0000250"/>
    <property type="project" value="UniProtKB"/>
</dbReference>
<dbReference type="GO" id="GO:0019899">
    <property type="term" value="F:enzyme binding"/>
    <property type="evidence" value="ECO:0000250"/>
    <property type="project" value="UniProtKB"/>
</dbReference>
<dbReference type="GO" id="GO:0046982">
    <property type="term" value="F:protein heterodimerization activity"/>
    <property type="evidence" value="ECO:0000250"/>
    <property type="project" value="UniProtKB"/>
</dbReference>
<dbReference type="GO" id="GO:0042803">
    <property type="term" value="F:protein homodimerization activity"/>
    <property type="evidence" value="ECO:0000250"/>
    <property type="project" value="UniProtKB"/>
</dbReference>
<dbReference type="GO" id="GO:0043495">
    <property type="term" value="F:protein-membrane adaptor activity"/>
    <property type="evidence" value="ECO:0000318"/>
    <property type="project" value="GO_Central"/>
</dbReference>
<dbReference type="GO" id="GO:0090158">
    <property type="term" value="P:endoplasmic reticulum membrane organization"/>
    <property type="evidence" value="ECO:0000318"/>
    <property type="project" value="GO_Central"/>
</dbReference>
<dbReference type="GO" id="GO:0030968">
    <property type="term" value="P:endoplasmic reticulum unfolded protein response"/>
    <property type="evidence" value="ECO:0000250"/>
    <property type="project" value="UniProtKB"/>
</dbReference>
<dbReference type="GO" id="GO:0061817">
    <property type="term" value="P:endoplasmic reticulum-plasma membrane tethering"/>
    <property type="evidence" value="ECO:0000318"/>
    <property type="project" value="GO_Central"/>
</dbReference>
<dbReference type="GO" id="GO:0006874">
    <property type="term" value="P:intracellular calcium ion homeostasis"/>
    <property type="evidence" value="ECO:0000250"/>
    <property type="project" value="UniProtKB"/>
</dbReference>
<dbReference type="GO" id="GO:0036498">
    <property type="term" value="P:IRE1-mediated unfolded protein response"/>
    <property type="evidence" value="ECO:0000250"/>
    <property type="project" value="UniProtKB"/>
</dbReference>
<dbReference type="GO" id="GO:0045070">
    <property type="term" value="P:positive regulation of viral genome replication"/>
    <property type="evidence" value="ECO:0000250"/>
    <property type="project" value="UniProtKB"/>
</dbReference>
<dbReference type="FunFam" id="2.60.40.10:FF:000334">
    <property type="entry name" value="vesicle-associated membrane protein-associated protein A isoform X1"/>
    <property type="match status" value="1"/>
</dbReference>
<dbReference type="Gene3D" id="2.60.40.10">
    <property type="entry name" value="Immunoglobulins"/>
    <property type="match status" value="1"/>
</dbReference>
<dbReference type="InterPro" id="IPR013783">
    <property type="entry name" value="Ig-like_fold"/>
</dbReference>
<dbReference type="InterPro" id="IPR000535">
    <property type="entry name" value="MSP_dom"/>
</dbReference>
<dbReference type="InterPro" id="IPR008962">
    <property type="entry name" value="PapD-like_sf"/>
</dbReference>
<dbReference type="InterPro" id="IPR016763">
    <property type="entry name" value="VAP"/>
</dbReference>
<dbReference type="PANTHER" id="PTHR10809">
    <property type="entry name" value="VESICLE-ASSOCIATED MEMBRANE PROTEIN-ASSOCIATED PROTEIN"/>
    <property type="match status" value="1"/>
</dbReference>
<dbReference type="PANTHER" id="PTHR10809:SF12">
    <property type="entry name" value="VESICLE-ASSOCIATED MEMBRANE PROTEIN-ASSOCIATED PROTEIN B_C"/>
    <property type="match status" value="1"/>
</dbReference>
<dbReference type="Pfam" id="PF00635">
    <property type="entry name" value="Motile_Sperm"/>
    <property type="match status" value="1"/>
</dbReference>
<dbReference type="PIRSF" id="PIRSF019693">
    <property type="entry name" value="VAMP-associated"/>
    <property type="match status" value="1"/>
</dbReference>
<dbReference type="SUPFAM" id="SSF49354">
    <property type="entry name" value="PapD-like"/>
    <property type="match status" value="1"/>
</dbReference>
<dbReference type="PROSITE" id="PS50202">
    <property type="entry name" value="MSP"/>
    <property type="match status" value="1"/>
</dbReference>
<reference key="1">
    <citation type="submission" date="2007-05" db="EMBL/GenBank/DDBJ databases">
        <authorList>
            <consortium name="Porcine genome sequencing project"/>
        </authorList>
    </citation>
    <scope>NUCLEOTIDE SEQUENCE [LARGE SCALE GENOMIC DNA]</scope>
</reference>
<keyword id="KW-0007">Acetylation</keyword>
<keyword id="KW-0175">Coiled coil</keyword>
<keyword id="KW-0256">Endoplasmic reticulum</keyword>
<keyword id="KW-1017">Isopeptide bond</keyword>
<keyword id="KW-0472">Membrane</keyword>
<keyword id="KW-0597">Phosphoprotein</keyword>
<keyword id="KW-1185">Reference proteome</keyword>
<keyword id="KW-0812">Transmembrane</keyword>
<keyword id="KW-1133">Transmembrane helix</keyword>
<keyword id="KW-0832">Ubl conjugation</keyword>
<keyword id="KW-0834">Unfolded protein response</keyword>
<comment type="function">
    <text evidence="1">Endoplasmic reticulum (ER)-anchored protein that mediates the formation of contact sites between the ER and endosomes via interaction with FFAT motif-containing proteins such as STARD3 or WDR44. Interacts with STARD3 in a FFAT motif phosphorylation dependent manner. Via interaction with WDR44 participates in neosynthesized protein export. Participates in the endoplasmic reticulum unfolded protein response (UPR) by inducing ERN1/IRE1 activity. Involved in cellular calcium homeostasis regulation.</text>
</comment>
<comment type="subunit">
    <text evidence="1">Homodimer, and heterodimer with VAPA. Interacts with VAMP1 and VAMP2. Interacts (via MSP domain) with ZFYVE27. Interacts with RMDN3. Interacts with KIF5A in a ZFYVE27-dependent manner. Interacts (via MSP domain) with STARD3 (via phospho-FFAT motif). Interacts with STARD3NL (via FFAT motif). Interacts with CERT1. Interacts with PLEKHA3 and SACM1L to form a ternary complex. Interacts with VPS13A (via FFAT motif). Interacts with RB1CC1 (via phosphorylated FFAT motif), MIGA2 (via phosphorylated FFAT motif), RMDN3 (via phosphorylated FFAT motif), OSBPL1A (via FFAT motif), KCNB1 (via phosphorylated FFAT motif) and KCNB2 (via phosphorylated FFAT motif). Interacts (via MSP domain) with WDR44 (via FFAT motif); the interactions connect the endoplasmic reticulum (ER) with the endosomal tubule (By similarity).</text>
</comment>
<comment type="subcellular location">
    <subcellularLocation>
        <location evidence="1">Endoplasmic reticulum membrane</location>
        <topology evidence="2">Single-pass type IV membrane protein</topology>
    </subcellularLocation>
    <text evidence="1">Present in mitochondria-associated membranes that are endoplasmic reticulum membrane regions closely apposed to the outer mitochondrial membrane.</text>
</comment>
<comment type="domain">
    <text evidence="1">The MSP domain binds the FFAT motif of many proteins.</text>
</comment>
<comment type="similarity">
    <text evidence="6">Belongs to the VAMP-associated protein (VAP) (TC 9.B.17) family.</text>
</comment>
<gene>
    <name evidence="1" type="primary">VAPB</name>
</gene>
<protein>
    <recommendedName>
        <fullName evidence="1">Vesicle-associated membrane protein-associated protein B</fullName>
        <shortName>VAMP-B</shortName>
        <shortName>VAMP-associated protein B</shortName>
        <shortName>VAP-B</shortName>
    </recommendedName>
</protein>
<feature type="initiator methionine" description="Removed" evidence="1">
    <location>
        <position position="1"/>
    </location>
</feature>
<feature type="chain" id="PRO_0000308178" description="Vesicle-associated membrane protein-associated protein B">
    <location>
        <begin position="2"/>
        <end position="243"/>
    </location>
</feature>
<feature type="topological domain" description="Cytoplasmic" evidence="3">
    <location>
        <begin position="2"/>
        <end position="218"/>
    </location>
</feature>
<feature type="transmembrane region" description="Helical; Anchor for type IV membrane protein" evidence="3">
    <location>
        <begin position="219"/>
        <end position="239"/>
    </location>
</feature>
<feature type="domain" description="MSP" evidence="4">
    <location>
        <begin position="7"/>
        <end position="124"/>
    </location>
</feature>
<feature type="region of interest" description="Disordered" evidence="5">
    <location>
        <begin position="185"/>
        <end position="217"/>
    </location>
</feature>
<feature type="coiled-coil region" evidence="3">
    <location>
        <begin position="161"/>
        <end position="196"/>
    </location>
</feature>
<feature type="compositionally biased region" description="Basic and acidic residues" evidence="5">
    <location>
        <begin position="185"/>
        <end position="197"/>
    </location>
</feature>
<feature type="site" description="Involved in binding the phosphorylated serine of the phospho-FFAT motif" evidence="1">
    <location>
        <position position="43"/>
    </location>
</feature>
<feature type="modified residue" description="N-acetylalanine" evidence="1">
    <location>
        <position position="2"/>
    </location>
</feature>
<feature type="modified residue" description="Phosphoserine" evidence="1">
    <location>
        <position position="146"/>
    </location>
</feature>
<feature type="modified residue" description="Phosphothreonine" evidence="1">
    <location>
        <position position="150"/>
    </location>
</feature>
<feature type="modified residue" description="Phosphoserine" evidence="1">
    <location>
        <position position="158"/>
    </location>
</feature>
<feature type="modified residue" description="Phosphoserine" evidence="1">
    <location>
        <position position="159"/>
    </location>
</feature>
<feature type="modified residue" description="Phosphoserine" evidence="1">
    <location>
        <position position="206"/>
    </location>
</feature>
<feature type="cross-link" description="Glycyl lysine isopeptide (Lys-Gly) (interchain with G-Cter in SUMO1)" evidence="1">
    <location>
        <position position="147"/>
    </location>
</feature>
<proteinExistence type="inferred from homology"/>
<accession>A5GFS8</accession>
<evidence type="ECO:0000250" key="1">
    <source>
        <dbReference type="UniProtKB" id="O95292"/>
    </source>
</evidence>
<evidence type="ECO:0000250" key="2">
    <source>
        <dbReference type="UniProtKB" id="Q9P0L0"/>
    </source>
</evidence>
<evidence type="ECO:0000255" key="3"/>
<evidence type="ECO:0000255" key="4">
    <source>
        <dbReference type="PROSITE-ProRule" id="PRU00132"/>
    </source>
</evidence>
<evidence type="ECO:0000256" key="5">
    <source>
        <dbReference type="SAM" id="MobiDB-lite"/>
    </source>
</evidence>
<evidence type="ECO:0000305" key="6"/>